<accession>A1VD24</accession>
<dbReference type="EC" id="2.3.1.234" evidence="1"/>
<dbReference type="EMBL" id="CP000527">
    <property type="protein sequence ID" value="ABM28340.1"/>
    <property type="molecule type" value="Genomic_DNA"/>
</dbReference>
<dbReference type="RefSeq" id="WP_010939126.1">
    <property type="nucleotide sequence ID" value="NC_008751.1"/>
</dbReference>
<dbReference type="SMR" id="A1VD24"/>
<dbReference type="KEGG" id="dvl:Dvul_1322"/>
<dbReference type="HOGENOM" id="CLU_023208_0_2_7"/>
<dbReference type="Proteomes" id="UP000009173">
    <property type="component" value="Chromosome"/>
</dbReference>
<dbReference type="GO" id="GO:0005737">
    <property type="term" value="C:cytoplasm"/>
    <property type="evidence" value="ECO:0007669"/>
    <property type="project" value="UniProtKB-SubCell"/>
</dbReference>
<dbReference type="GO" id="GO:0005506">
    <property type="term" value="F:iron ion binding"/>
    <property type="evidence" value="ECO:0007669"/>
    <property type="project" value="UniProtKB-UniRule"/>
</dbReference>
<dbReference type="GO" id="GO:0061711">
    <property type="term" value="F:N(6)-L-threonylcarbamoyladenine synthase activity"/>
    <property type="evidence" value="ECO:0007669"/>
    <property type="project" value="UniProtKB-EC"/>
</dbReference>
<dbReference type="GO" id="GO:0002949">
    <property type="term" value="P:tRNA threonylcarbamoyladenosine modification"/>
    <property type="evidence" value="ECO:0007669"/>
    <property type="project" value="UniProtKB-UniRule"/>
</dbReference>
<dbReference type="CDD" id="cd24133">
    <property type="entry name" value="ASKHA_NBD_TsaD_bac"/>
    <property type="match status" value="1"/>
</dbReference>
<dbReference type="FunFam" id="3.30.420.40:FF:000012">
    <property type="entry name" value="tRNA N6-adenosine threonylcarbamoyltransferase"/>
    <property type="match status" value="1"/>
</dbReference>
<dbReference type="Gene3D" id="3.30.420.40">
    <property type="match status" value="2"/>
</dbReference>
<dbReference type="HAMAP" id="MF_01445">
    <property type="entry name" value="TsaD"/>
    <property type="match status" value="1"/>
</dbReference>
<dbReference type="InterPro" id="IPR043129">
    <property type="entry name" value="ATPase_NBD"/>
</dbReference>
<dbReference type="InterPro" id="IPR000905">
    <property type="entry name" value="Gcp-like_dom"/>
</dbReference>
<dbReference type="InterPro" id="IPR017861">
    <property type="entry name" value="KAE1/TsaD"/>
</dbReference>
<dbReference type="InterPro" id="IPR017860">
    <property type="entry name" value="Peptidase_M22_CS"/>
</dbReference>
<dbReference type="InterPro" id="IPR022450">
    <property type="entry name" value="TsaD"/>
</dbReference>
<dbReference type="NCBIfam" id="TIGR00329">
    <property type="entry name" value="gcp_kae1"/>
    <property type="match status" value="1"/>
</dbReference>
<dbReference type="NCBIfam" id="TIGR03723">
    <property type="entry name" value="T6A_TsaD_YgjD"/>
    <property type="match status" value="1"/>
</dbReference>
<dbReference type="PANTHER" id="PTHR11735">
    <property type="entry name" value="TRNA N6-ADENOSINE THREONYLCARBAMOYLTRANSFERASE"/>
    <property type="match status" value="1"/>
</dbReference>
<dbReference type="PANTHER" id="PTHR11735:SF6">
    <property type="entry name" value="TRNA N6-ADENOSINE THREONYLCARBAMOYLTRANSFERASE, MITOCHONDRIAL"/>
    <property type="match status" value="1"/>
</dbReference>
<dbReference type="Pfam" id="PF00814">
    <property type="entry name" value="TsaD"/>
    <property type="match status" value="1"/>
</dbReference>
<dbReference type="PRINTS" id="PR00789">
    <property type="entry name" value="OSIALOPTASE"/>
</dbReference>
<dbReference type="SUPFAM" id="SSF53067">
    <property type="entry name" value="Actin-like ATPase domain"/>
    <property type="match status" value="1"/>
</dbReference>
<dbReference type="PROSITE" id="PS01016">
    <property type="entry name" value="GLYCOPROTEASE"/>
    <property type="match status" value="1"/>
</dbReference>
<feature type="chain" id="PRO_0000303350" description="tRNA N6-adenosine threonylcarbamoyltransferase">
    <location>
        <begin position="1"/>
        <end position="361"/>
    </location>
</feature>
<feature type="binding site" evidence="1">
    <location>
        <position position="110"/>
    </location>
    <ligand>
        <name>Fe cation</name>
        <dbReference type="ChEBI" id="CHEBI:24875"/>
    </ligand>
</feature>
<feature type="binding site" evidence="1">
    <location>
        <position position="114"/>
    </location>
    <ligand>
        <name>Fe cation</name>
        <dbReference type="ChEBI" id="CHEBI:24875"/>
    </ligand>
</feature>
<feature type="binding site" evidence="1">
    <location>
        <begin position="132"/>
        <end position="136"/>
    </location>
    <ligand>
        <name>substrate</name>
    </ligand>
</feature>
<feature type="binding site" evidence="1">
    <location>
        <position position="165"/>
    </location>
    <ligand>
        <name>substrate</name>
    </ligand>
</feature>
<feature type="binding site" evidence="1">
    <location>
        <position position="178"/>
    </location>
    <ligand>
        <name>substrate</name>
    </ligand>
</feature>
<feature type="binding site" evidence="1">
    <location>
        <position position="182"/>
    </location>
    <ligand>
        <name>substrate</name>
    </ligand>
</feature>
<feature type="binding site" evidence="1">
    <location>
        <position position="289"/>
    </location>
    <ligand>
        <name>substrate</name>
    </ligand>
</feature>
<feature type="binding site" evidence="1">
    <location>
        <position position="317"/>
    </location>
    <ligand>
        <name>Fe cation</name>
        <dbReference type="ChEBI" id="CHEBI:24875"/>
    </ligand>
</feature>
<proteinExistence type="inferred from homology"/>
<organism>
    <name type="scientific">Nitratidesulfovibrio vulgaris (strain DP4)</name>
    <name type="common">Desulfovibrio vulgaris</name>
    <dbReference type="NCBI Taxonomy" id="391774"/>
    <lineage>
        <taxon>Bacteria</taxon>
        <taxon>Pseudomonadati</taxon>
        <taxon>Thermodesulfobacteriota</taxon>
        <taxon>Desulfovibrionia</taxon>
        <taxon>Desulfovibrionales</taxon>
        <taxon>Desulfovibrionaceae</taxon>
        <taxon>Nitratidesulfovibrio</taxon>
    </lineage>
</organism>
<reference key="1">
    <citation type="journal article" date="2009" name="Environ. Microbiol.">
        <title>Contribution of mobile genetic elements to Desulfovibrio vulgaris genome plasticity.</title>
        <authorList>
            <person name="Walker C.B."/>
            <person name="Stolyar S."/>
            <person name="Chivian D."/>
            <person name="Pinel N."/>
            <person name="Gabster J.A."/>
            <person name="Dehal P.S."/>
            <person name="He Z."/>
            <person name="Yang Z.K."/>
            <person name="Yen H.C."/>
            <person name="Zhou J."/>
            <person name="Wall J.D."/>
            <person name="Hazen T.C."/>
            <person name="Arkin A.P."/>
            <person name="Stahl D.A."/>
        </authorList>
    </citation>
    <scope>NUCLEOTIDE SEQUENCE [LARGE SCALE GENOMIC DNA]</scope>
    <source>
        <strain>DP4</strain>
    </source>
</reference>
<comment type="function">
    <text evidence="1">Required for the formation of a threonylcarbamoyl group on adenosine at position 37 (t(6)A37) in tRNAs that read codons beginning with adenine. Is involved in the transfer of the threonylcarbamoyl moiety of threonylcarbamoyl-AMP (TC-AMP) to the N6 group of A37, together with TsaE and TsaB. TsaD likely plays a direct catalytic role in this reaction.</text>
</comment>
<comment type="catalytic activity">
    <reaction evidence="1">
        <text>L-threonylcarbamoyladenylate + adenosine(37) in tRNA = N(6)-L-threonylcarbamoyladenosine(37) in tRNA + AMP + H(+)</text>
        <dbReference type="Rhea" id="RHEA:37059"/>
        <dbReference type="Rhea" id="RHEA-COMP:10162"/>
        <dbReference type="Rhea" id="RHEA-COMP:10163"/>
        <dbReference type="ChEBI" id="CHEBI:15378"/>
        <dbReference type="ChEBI" id="CHEBI:73682"/>
        <dbReference type="ChEBI" id="CHEBI:74411"/>
        <dbReference type="ChEBI" id="CHEBI:74418"/>
        <dbReference type="ChEBI" id="CHEBI:456215"/>
        <dbReference type="EC" id="2.3.1.234"/>
    </reaction>
</comment>
<comment type="cofactor">
    <cofactor evidence="1">
        <name>Fe(2+)</name>
        <dbReference type="ChEBI" id="CHEBI:29033"/>
    </cofactor>
    <text evidence="1">Binds 1 Fe(2+) ion per subunit.</text>
</comment>
<comment type="subcellular location">
    <subcellularLocation>
        <location evidence="1">Cytoplasm</location>
    </subcellularLocation>
</comment>
<comment type="similarity">
    <text evidence="1">Belongs to the KAE1 / TsaD family.</text>
</comment>
<sequence>MLCIGIETSCDETGLALVRDGRLVHAVMSSQADIHALFGGVVPEIASREHYRLIGPLYDLLLREAGVGPTELDAVAVARGPGLLGSLLVGMAFAKGLALGFDIPLVGVNHLHAHLLAAGLERELVFPALGLLVSGGHTHIYRIESPVSFRLLGRTLDDAAGEAYDKVAKMLRLPYPGGRILDQQGRRGIADPRLFPRPYTDNDNLDFSFSGLKTAVQTHLSRHPELVPSPDAAQAVAGGHDAPEGLRNMCASFNEAVAETLCIKLGRALDGDDGVGVRALIVAGGVAANSYVREHTARLAVSRGLELIVPSPPLCTDNGSMIAYAGWLLRQGGLSHSLDLEAVPRGRAIPDDYRQGPAGCS</sequence>
<keyword id="KW-0012">Acyltransferase</keyword>
<keyword id="KW-0963">Cytoplasm</keyword>
<keyword id="KW-0408">Iron</keyword>
<keyword id="KW-0479">Metal-binding</keyword>
<keyword id="KW-0808">Transferase</keyword>
<keyword id="KW-0819">tRNA processing</keyword>
<name>TSAD_NITV4</name>
<evidence type="ECO:0000255" key="1">
    <source>
        <dbReference type="HAMAP-Rule" id="MF_01445"/>
    </source>
</evidence>
<protein>
    <recommendedName>
        <fullName evidence="1">tRNA N6-adenosine threonylcarbamoyltransferase</fullName>
        <ecNumber evidence="1">2.3.1.234</ecNumber>
    </recommendedName>
    <alternativeName>
        <fullName evidence="1">N6-L-threonylcarbamoyladenine synthase</fullName>
        <shortName evidence="1">t(6)A synthase</shortName>
    </alternativeName>
    <alternativeName>
        <fullName evidence="1">t(6)A37 threonylcarbamoyladenosine biosynthesis protein TsaD</fullName>
    </alternativeName>
    <alternativeName>
        <fullName evidence="1">tRNA threonylcarbamoyladenosine biosynthesis protein TsaD</fullName>
    </alternativeName>
</protein>
<gene>
    <name evidence="1" type="primary">tsaD</name>
    <name type="synonym">gcp</name>
    <name type="ordered locus">Dvul_1322</name>
</gene>